<gene>
    <name evidence="1" type="primary">rpmG</name>
    <name type="ordered locus">YPN_3799</name>
    <name type="ORF">YP516_4319</name>
</gene>
<accession>Q1CD04</accession>
<accession>D1Q2F9</accession>
<evidence type="ECO:0000255" key="1">
    <source>
        <dbReference type="HAMAP-Rule" id="MF_00294"/>
    </source>
</evidence>
<evidence type="ECO:0000305" key="2"/>
<dbReference type="EMBL" id="CP000305">
    <property type="protein sequence ID" value="ABG20126.1"/>
    <property type="molecule type" value="Genomic_DNA"/>
</dbReference>
<dbReference type="EMBL" id="ACNQ01000019">
    <property type="protein sequence ID" value="EEO74712.1"/>
    <property type="molecule type" value="Genomic_DNA"/>
</dbReference>
<dbReference type="RefSeq" id="WP_002208990.1">
    <property type="nucleotide sequence ID" value="NZ_ACNQ01000019.1"/>
</dbReference>
<dbReference type="SMR" id="Q1CD04"/>
<dbReference type="GeneID" id="96663532"/>
<dbReference type="KEGG" id="ypn:YPN_3799"/>
<dbReference type="HOGENOM" id="CLU_190949_1_1_6"/>
<dbReference type="Proteomes" id="UP000008936">
    <property type="component" value="Chromosome"/>
</dbReference>
<dbReference type="GO" id="GO:0022625">
    <property type="term" value="C:cytosolic large ribosomal subunit"/>
    <property type="evidence" value="ECO:0007669"/>
    <property type="project" value="TreeGrafter"/>
</dbReference>
<dbReference type="GO" id="GO:0003735">
    <property type="term" value="F:structural constituent of ribosome"/>
    <property type="evidence" value="ECO:0007669"/>
    <property type="project" value="InterPro"/>
</dbReference>
<dbReference type="GO" id="GO:0006412">
    <property type="term" value="P:translation"/>
    <property type="evidence" value="ECO:0007669"/>
    <property type="project" value="UniProtKB-UniRule"/>
</dbReference>
<dbReference type="FunFam" id="2.20.28.120:FF:000001">
    <property type="entry name" value="50S ribosomal protein L33"/>
    <property type="match status" value="1"/>
</dbReference>
<dbReference type="Gene3D" id="2.20.28.120">
    <property type="entry name" value="Ribosomal protein L33"/>
    <property type="match status" value="1"/>
</dbReference>
<dbReference type="HAMAP" id="MF_00294">
    <property type="entry name" value="Ribosomal_bL33"/>
    <property type="match status" value="1"/>
</dbReference>
<dbReference type="InterPro" id="IPR001705">
    <property type="entry name" value="Ribosomal_bL33"/>
</dbReference>
<dbReference type="InterPro" id="IPR018264">
    <property type="entry name" value="Ribosomal_bL33_CS"/>
</dbReference>
<dbReference type="InterPro" id="IPR038584">
    <property type="entry name" value="Ribosomal_bL33_sf"/>
</dbReference>
<dbReference type="InterPro" id="IPR011332">
    <property type="entry name" value="Ribosomal_zn-bd"/>
</dbReference>
<dbReference type="NCBIfam" id="NF001860">
    <property type="entry name" value="PRK00595.1"/>
    <property type="match status" value="1"/>
</dbReference>
<dbReference type="NCBIfam" id="TIGR01023">
    <property type="entry name" value="rpmG_bact"/>
    <property type="match status" value="1"/>
</dbReference>
<dbReference type="PANTHER" id="PTHR15238">
    <property type="entry name" value="54S RIBOSOMAL PROTEIN L39, MITOCHONDRIAL"/>
    <property type="match status" value="1"/>
</dbReference>
<dbReference type="PANTHER" id="PTHR15238:SF1">
    <property type="entry name" value="LARGE RIBOSOMAL SUBUNIT PROTEIN BL33M"/>
    <property type="match status" value="1"/>
</dbReference>
<dbReference type="Pfam" id="PF00471">
    <property type="entry name" value="Ribosomal_L33"/>
    <property type="match status" value="1"/>
</dbReference>
<dbReference type="SUPFAM" id="SSF57829">
    <property type="entry name" value="Zn-binding ribosomal proteins"/>
    <property type="match status" value="1"/>
</dbReference>
<dbReference type="PROSITE" id="PS00582">
    <property type="entry name" value="RIBOSOMAL_L33"/>
    <property type="match status" value="1"/>
</dbReference>
<keyword id="KW-0687">Ribonucleoprotein</keyword>
<keyword id="KW-0689">Ribosomal protein</keyword>
<organism>
    <name type="scientific">Yersinia pestis bv. Antiqua (strain Nepal516)</name>
    <dbReference type="NCBI Taxonomy" id="377628"/>
    <lineage>
        <taxon>Bacteria</taxon>
        <taxon>Pseudomonadati</taxon>
        <taxon>Pseudomonadota</taxon>
        <taxon>Gammaproteobacteria</taxon>
        <taxon>Enterobacterales</taxon>
        <taxon>Yersiniaceae</taxon>
        <taxon>Yersinia</taxon>
    </lineage>
</organism>
<feature type="chain" id="PRO_1000004220" description="Large ribosomal subunit protein bL33">
    <location>
        <begin position="1"/>
        <end position="55"/>
    </location>
</feature>
<comment type="similarity">
    <text evidence="1">Belongs to the bacterial ribosomal protein bL33 family.</text>
</comment>
<sequence length="55" mass="6358">MAKGVREKIKLVSSAGTGHFYTTTKNKRTKPEKLELKKFDPVVRQHVLYKEAKIK</sequence>
<name>RL33_YERPN</name>
<reference key="1">
    <citation type="journal article" date="2006" name="J. Bacteriol.">
        <title>Complete genome sequence of Yersinia pestis strains Antiqua and Nepal516: evidence of gene reduction in an emerging pathogen.</title>
        <authorList>
            <person name="Chain P.S.G."/>
            <person name="Hu P."/>
            <person name="Malfatti S.A."/>
            <person name="Radnedge L."/>
            <person name="Larimer F."/>
            <person name="Vergez L.M."/>
            <person name="Worsham P."/>
            <person name="Chu M.C."/>
            <person name="Andersen G.L."/>
        </authorList>
    </citation>
    <scope>NUCLEOTIDE SEQUENCE [LARGE SCALE GENOMIC DNA]</scope>
    <source>
        <strain>Nepal516</strain>
    </source>
</reference>
<reference key="2">
    <citation type="submission" date="2009-04" db="EMBL/GenBank/DDBJ databases">
        <title>Yersinia pestis Nepal516A whole genome shotgun sequencing project.</title>
        <authorList>
            <person name="Plunkett G. III"/>
            <person name="Anderson B.D."/>
            <person name="Baumler D.J."/>
            <person name="Burland V."/>
            <person name="Cabot E.L."/>
            <person name="Glasner J.D."/>
            <person name="Mau B."/>
            <person name="Neeno-Eckwall E."/>
            <person name="Perna N.T."/>
            <person name="Munk A.C."/>
            <person name="Tapia R."/>
            <person name="Green L.D."/>
            <person name="Rogers Y.C."/>
            <person name="Detter J.C."/>
            <person name="Bruce D.C."/>
            <person name="Brettin T.S."/>
        </authorList>
    </citation>
    <scope>NUCLEOTIDE SEQUENCE [LARGE SCALE GENOMIC DNA]</scope>
    <source>
        <strain>Nepal516</strain>
    </source>
</reference>
<protein>
    <recommendedName>
        <fullName evidence="1">Large ribosomal subunit protein bL33</fullName>
    </recommendedName>
    <alternativeName>
        <fullName evidence="2">50S ribosomal protein L33</fullName>
    </alternativeName>
</protein>
<proteinExistence type="inferred from homology"/>